<evidence type="ECO:0000255" key="1">
    <source>
        <dbReference type="HAMAP-Rule" id="MF_01218"/>
    </source>
</evidence>
<gene>
    <name evidence="1" type="primary">upp</name>
    <name type="ordered locus">Smlt1819</name>
</gene>
<keyword id="KW-0021">Allosteric enzyme</keyword>
<keyword id="KW-0328">Glycosyltransferase</keyword>
<keyword id="KW-0342">GTP-binding</keyword>
<keyword id="KW-0460">Magnesium</keyword>
<keyword id="KW-0547">Nucleotide-binding</keyword>
<keyword id="KW-1185">Reference proteome</keyword>
<keyword id="KW-0808">Transferase</keyword>
<protein>
    <recommendedName>
        <fullName evidence="1">Uracil phosphoribosyltransferase</fullName>
        <ecNumber evidence="1">2.4.2.9</ecNumber>
    </recommendedName>
    <alternativeName>
        <fullName evidence="1">UMP pyrophosphorylase</fullName>
    </alternativeName>
    <alternativeName>
        <fullName evidence="1">UPRTase</fullName>
    </alternativeName>
</protein>
<accession>B2FLX2</accession>
<name>UPP_STRMK</name>
<feature type="chain" id="PRO_1000139168" description="Uracil phosphoribosyltransferase">
    <location>
        <begin position="1"/>
        <end position="210"/>
    </location>
</feature>
<feature type="binding site" evidence="1">
    <location>
        <position position="78"/>
    </location>
    <ligand>
        <name>5-phospho-alpha-D-ribose 1-diphosphate</name>
        <dbReference type="ChEBI" id="CHEBI:58017"/>
    </ligand>
</feature>
<feature type="binding site" evidence="1">
    <location>
        <position position="103"/>
    </location>
    <ligand>
        <name>5-phospho-alpha-D-ribose 1-diphosphate</name>
        <dbReference type="ChEBI" id="CHEBI:58017"/>
    </ligand>
</feature>
<feature type="binding site" evidence="1">
    <location>
        <begin position="130"/>
        <end position="138"/>
    </location>
    <ligand>
        <name>5-phospho-alpha-D-ribose 1-diphosphate</name>
        <dbReference type="ChEBI" id="CHEBI:58017"/>
    </ligand>
</feature>
<feature type="binding site" evidence="1">
    <location>
        <position position="193"/>
    </location>
    <ligand>
        <name>uracil</name>
        <dbReference type="ChEBI" id="CHEBI:17568"/>
    </ligand>
</feature>
<feature type="binding site" evidence="1">
    <location>
        <begin position="198"/>
        <end position="200"/>
    </location>
    <ligand>
        <name>uracil</name>
        <dbReference type="ChEBI" id="CHEBI:17568"/>
    </ligand>
</feature>
<feature type="binding site" evidence="1">
    <location>
        <position position="199"/>
    </location>
    <ligand>
        <name>5-phospho-alpha-D-ribose 1-diphosphate</name>
        <dbReference type="ChEBI" id="CHEBI:58017"/>
    </ligand>
</feature>
<reference key="1">
    <citation type="journal article" date="2008" name="Genome Biol.">
        <title>The complete genome, comparative and functional analysis of Stenotrophomonas maltophilia reveals an organism heavily shielded by drug resistance determinants.</title>
        <authorList>
            <person name="Crossman L.C."/>
            <person name="Gould V.C."/>
            <person name="Dow J.M."/>
            <person name="Vernikos G.S."/>
            <person name="Okazaki A."/>
            <person name="Sebaihia M."/>
            <person name="Saunders D."/>
            <person name="Arrowsmith C."/>
            <person name="Carver T."/>
            <person name="Peters N."/>
            <person name="Adlem E."/>
            <person name="Kerhornou A."/>
            <person name="Lord A."/>
            <person name="Murphy L."/>
            <person name="Seeger K."/>
            <person name="Squares R."/>
            <person name="Rutter S."/>
            <person name="Quail M.A."/>
            <person name="Rajandream M.A."/>
            <person name="Harris D."/>
            <person name="Churcher C."/>
            <person name="Bentley S.D."/>
            <person name="Parkhill J."/>
            <person name="Thomson N.R."/>
            <person name="Avison M.B."/>
        </authorList>
    </citation>
    <scope>NUCLEOTIDE SEQUENCE [LARGE SCALE GENOMIC DNA]</scope>
    <source>
        <strain>K279a</strain>
    </source>
</reference>
<organism>
    <name type="scientific">Stenotrophomonas maltophilia (strain K279a)</name>
    <dbReference type="NCBI Taxonomy" id="522373"/>
    <lineage>
        <taxon>Bacteria</taxon>
        <taxon>Pseudomonadati</taxon>
        <taxon>Pseudomonadota</taxon>
        <taxon>Gammaproteobacteria</taxon>
        <taxon>Lysobacterales</taxon>
        <taxon>Lysobacteraceae</taxon>
        <taxon>Stenotrophomonas</taxon>
        <taxon>Stenotrophomonas maltophilia group</taxon>
    </lineage>
</organism>
<comment type="function">
    <text evidence="1">Catalyzes the conversion of uracil and 5-phospho-alpha-D-ribose 1-diphosphate (PRPP) to UMP and diphosphate.</text>
</comment>
<comment type="catalytic activity">
    <reaction evidence="1">
        <text>UMP + diphosphate = 5-phospho-alpha-D-ribose 1-diphosphate + uracil</text>
        <dbReference type="Rhea" id="RHEA:13017"/>
        <dbReference type="ChEBI" id="CHEBI:17568"/>
        <dbReference type="ChEBI" id="CHEBI:33019"/>
        <dbReference type="ChEBI" id="CHEBI:57865"/>
        <dbReference type="ChEBI" id="CHEBI:58017"/>
        <dbReference type="EC" id="2.4.2.9"/>
    </reaction>
</comment>
<comment type="cofactor">
    <cofactor evidence="1">
        <name>Mg(2+)</name>
        <dbReference type="ChEBI" id="CHEBI:18420"/>
    </cofactor>
    <text evidence="1">Binds 1 Mg(2+) ion per subunit. The magnesium is bound as Mg-PRPP.</text>
</comment>
<comment type="activity regulation">
    <text evidence="1">Allosterically activated by GTP.</text>
</comment>
<comment type="pathway">
    <text evidence="1">Pyrimidine metabolism; UMP biosynthesis via salvage pathway; UMP from uracil: step 1/1.</text>
</comment>
<comment type="similarity">
    <text evidence="1">Belongs to the UPRTase family.</text>
</comment>
<proteinExistence type="inferred from homology"/>
<sequence>MKIVEVRHPLVQHKIGLMRNAALSTKDFRELANELGTLLAYEATADLDTEPHTLAGWAGPVTVQRIAGAKITVVPILRAGLGMLSGVLSLIPAARVSVVGLQRDEETLQPVPYFERLTGRLEERDALILDPMLATGGTLIATIDMLKRAGARRIKGIFLVAAPEGIEAVKAVHPDVEIYTAAIDAQLNDKGYILPGLGDAGDRIFGTRVG</sequence>
<dbReference type="EC" id="2.4.2.9" evidence="1"/>
<dbReference type="EMBL" id="AM743169">
    <property type="protein sequence ID" value="CAQ45340.1"/>
    <property type="molecule type" value="Genomic_DNA"/>
</dbReference>
<dbReference type="RefSeq" id="WP_005416149.1">
    <property type="nucleotide sequence ID" value="NC_010943.1"/>
</dbReference>
<dbReference type="SMR" id="B2FLX2"/>
<dbReference type="EnsemblBacteria" id="CAQ45340">
    <property type="protein sequence ID" value="CAQ45340"/>
    <property type="gene ID" value="Smlt1819"/>
</dbReference>
<dbReference type="GeneID" id="97260726"/>
<dbReference type="KEGG" id="sml:Smlt1819"/>
<dbReference type="eggNOG" id="COG0035">
    <property type="taxonomic scope" value="Bacteria"/>
</dbReference>
<dbReference type="HOGENOM" id="CLU_067096_2_2_6"/>
<dbReference type="UniPathway" id="UPA00574">
    <property type="reaction ID" value="UER00636"/>
</dbReference>
<dbReference type="Proteomes" id="UP000008840">
    <property type="component" value="Chromosome"/>
</dbReference>
<dbReference type="GO" id="GO:0005525">
    <property type="term" value="F:GTP binding"/>
    <property type="evidence" value="ECO:0007669"/>
    <property type="project" value="UniProtKB-KW"/>
</dbReference>
<dbReference type="GO" id="GO:0000287">
    <property type="term" value="F:magnesium ion binding"/>
    <property type="evidence" value="ECO:0007669"/>
    <property type="project" value="UniProtKB-UniRule"/>
</dbReference>
<dbReference type="GO" id="GO:0004845">
    <property type="term" value="F:uracil phosphoribosyltransferase activity"/>
    <property type="evidence" value="ECO:0007669"/>
    <property type="project" value="UniProtKB-UniRule"/>
</dbReference>
<dbReference type="GO" id="GO:0044206">
    <property type="term" value="P:UMP salvage"/>
    <property type="evidence" value="ECO:0007669"/>
    <property type="project" value="UniProtKB-UniRule"/>
</dbReference>
<dbReference type="GO" id="GO:0006223">
    <property type="term" value="P:uracil salvage"/>
    <property type="evidence" value="ECO:0007669"/>
    <property type="project" value="InterPro"/>
</dbReference>
<dbReference type="CDD" id="cd06223">
    <property type="entry name" value="PRTases_typeI"/>
    <property type="match status" value="1"/>
</dbReference>
<dbReference type="FunFam" id="3.40.50.2020:FF:000003">
    <property type="entry name" value="Uracil phosphoribosyltransferase"/>
    <property type="match status" value="1"/>
</dbReference>
<dbReference type="Gene3D" id="3.40.50.2020">
    <property type="match status" value="1"/>
</dbReference>
<dbReference type="HAMAP" id="MF_01218_B">
    <property type="entry name" value="Upp_B"/>
    <property type="match status" value="1"/>
</dbReference>
<dbReference type="InterPro" id="IPR000836">
    <property type="entry name" value="PRibTrfase_dom"/>
</dbReference>
<dbReference type="InterPro" id="IPR029057">
    <property type="entry name" value="PRTase-like"/>
</dbReference>
<dbReference type="InterPro" id="IPR034332">
    <property type="entry name" value="Upp_B"/>
</dbReference>
<dbReference type="InterPro" id="IPR050054">
    <property type="entry name" value="UPRTase/APRTase"/>
</dbReference>
<dbReference type="InterPro" id="IPR005765">
    <property type="entry name" value="Ura_phspho_trans"/>
</dbReference>
<dbReference type="NCBIfam" id="NF001097">
    <property type="entry name" value="PRK00129.1"/>
    <property type="match status" value="1"/>
</dbReference>
<dbReference type="NCBIfam" id="TIGR01091">
    <property type="entry name" value="upp"/>
    <property type="match status" value="1"/>
</dbReference>
<dbReference type="PANTHER" id="PTHR32315">
    <property type="entry name" value="ADENINE PHOSPHORIBOSYLTRANSFERASE"/>
    <property type="match status" value="1"/>
</dbReference>
<dbReference type="PANTHER" id="PTHR32315:SF4">
    <property type="entry name" value="URACIL PHOSPHORIBOSYLTRANSFERASE, CHLOROPLASTIC"/>
    <property type="match status" value="1"/>
</dbReference>
<dbReference type="Pfam" id="PF14681">
    <property type="entry name" value="UPRTase"/>
    <property type="match status" value="1"/>
</dbReference>
<dbReference type="SUPFAM" id="SSF53271">
    <property type="entry name" value="PRTase-like"/>
    <property type="match status" value="1"/>
</dbReference>